<accession>P15507</accession>
<keyword id="KW-0027">Amidation</keyword>
<keyword id="KW-0903">Direct protein sequencing</keyword>
<keyword id="KW-0527">Neuropeptide</keyword>
<keyword id="KW-1185">Reference proteome</keyword>
<keyword id="KW-0964">Secreted</keyword>
<reference key="1">
    <citation type="journal article" date="1985" name="Proc. Natl. Acad. Sci. U.S.A.">
        <title>Isolation, sequencing, synthesis, and pharmacological characterization of two brain neuropeptides that modulate the action of morphine.</title>
        <authorList>
            <person name="Yang H.-Y.T."/>
            <person name="Fratta W."/>
            <person name="Majane E.A."/>
            <person name="Costa E."/>
        </authorList>
    </citation>
    <scope>PROTEIN SEQUENCE</scope>
    <scope>AMIDATION AT PHE-8</scope>
    <scope>SYNTHESIS</scope>
    <source>
        <tissue>Brain</tissue>
    </source>
</reference>
<comment type="function">
    <text>Modulates the action of morphine.</text>
</comment>
<comment type="subcellular location">
    <subcellularLocation>
        <location>Secreted</location>
    </subcellularLocation>
</comment>
<protein>
    <recommendedName>
        <fullName>Morphine-modulating neuropeptide B</fullName>
    </recommendedName>
</protein>
<feature type="peptide" id="PRO_0000044178" description="Morphine-modulating neuropeptide B">
    <location>
        <begin position="1"/>
        <end position="8"/>
    </location>
</feature>
<feature type="modified residue" description="Phenylalanine amide" evidence="1">
    <location>
        <position position="8"/>
    </location>
</feature>
<proteinExistence type="evidence at protein level"/>
<evidence type="ECO:0000269" key="1">
    <source>
    </source>
</evidence>
<organism>
    <name type="scientific">Bos taurus</name>
    <name type="common">Bovine</name>
    <dbReference type="NCBI Taxonomy" id="9913"/>
    <lineage>
        <taxon>Eukaryota</taxon>
        <taxon>Metazoa</taxon>
        <taxon>Chordata</taxon>
        <taxon>Craniata</taxon>
        <taxon>Vertebrata</taxon>
        <taxon>Euteleostomi</taxon>
        <taxon>Mammalia</taxon>
        <taxon>Eutheria</taxon>
        <taxon>Laurasiatheria</taxon>
        <taxon>Artiodactyla</taxon>
        <taxon>Ruminantia</taxon>
        <taxon>Pecora</taxon>
        <taxon>Bovidae</taxon>
        <taxon>Bovinae</taxon>
        <taxon>Bos</taxon>
    </lineage>
</organism>
<name>NPMB_BOVIN</name>
<dbReference type="PIR" id="B24749">
    <property type="entry name" value="B24749"/>
</dbReference>
<dbReference type="InParanoid" id="P15507"/>
<dbReference type="Proteomes" id="UP000009136">
    <property type="component" value="Unplaced"/>
</dbReference>
<dbReference type="GO" id="GO:0005576">
    <property type="term" value="C:extracellular region"/>
    <property type="evidence" value="ECO:0007669"/>
    <property type="project" value="UniProtKB-SubCell"/>
</dbReference>
<dbReference type="GO" id="GO:0007218">
    <property type="term" value="P:neuropeptide signaling pathway"/>
    <property type="evidence" value="ECO:0007669"/>
    <property type="project" value="UniProtKB-KW"/>
</dbReference>
<sequence length="8" mass="1082">FLFQPQRF</sequence>